<feature type="chain" id="PRO_0000116061" description="DNA polymerase processivity factor">
    <location>
        <begin position="1"/>
        <end position="488"/>
    </location>
</feature>
<feature type="region of interest" description="Disordered" evidence="1">
    <location>
        <begin position="1"/>
        <end position="26"/>
    </location>
</feature>
<feature type="region of interest" description="Disordered" evidence="1">
    <location>
        <begin position="331"/>
        <end position="453"/>
    </location>
</feature>
<feature type="region of interest" description="Disordered" evidence="1">
    <location>
        <begin position="469"/>
        <end position="488"/>
    </location>
</feature>
<feature type="short sequence motif" description="Bipartite nuclear localization signal">
    <location>
        <begin position="394"/>
        <end position="413"/>
    </location>
</feature>
<feature type="compositionally biased region" description="Low complexity" evidence="1">
    <location>
        <begin position="331"/>
        <end position="344"/>
    </location>
</feature>
<feature type="compositionally biased region" description="Polar residues" evidence="1">
    <location>
        <begin position="345"/>
        <end position="355"/>
    </location>
</feature>
<feature type="compositionally biased region" description="Low complexity" evidence="1">
    <location>
        <begin position="368"/>
        <end position="379"/>
    </location>
</feature>
<feature type="compositionally biased region" description="Polar residues" evidence="1">
    <location>
        <begin position="383"/>
        <end position="393"/>
    </location>
</feature>
<feature type="compositionally biased region" description="Basic and acidic residues" evidence="1">
    <location>
        <begin position="398"/>
        <end position="409"/>
    </location>
</feature>
<feature type="compositionally biased region" description="Low complexity" evidence="1">
    <location>
        <begin position="437"/>
        <end position="453"/>
    </location>
</feature>
<feature type="sequence variant" description="In strain: Nonneuroinvasive mutant HF10.">
    <original>S</original>
    <variation>N</variation>
    <location>
        <position position="349"/>
    </location>
</feature>
<feature type="strand" evidence="8">
    <location>
        <begin position="30"/>
        <end position="36"/>
    </location>
</feature>
<feature type="helix" evidence="8">
    <location>
        <begin position="37"/>
        <end position="47"/>
    </location>
</feature>
<feature type="helix" evidence="8">
    <location>
        <begin position="48"/>
        <end position="50"/>
    </location>
</feature>
<feature type="turn" evidence="8">
    <location>
        <begin position="51"/>
        <end position="54"/>
    </location>
</feature>
<feature type="strand" evidence="8">
    <location>
        <begin position="58"/>
        <end position="62"/>
    </location>
</feature>
<feature type="strand" evidence="8">
    <location>
        <begin position="65"/>
        <end position="72"/>
    </location>
</feature>
<feature type="strand" evidence="8">
    <location>
        <begin position="75"/>
        <end position="82"/>
    </location>
</feature>
<feature type="helix" evidence="8">
    <location>
        <begin position="83"/>
        <end position="85"/>
    </location>
</feature>
<feature type="strand" evidence="8">
    <location>
        <begin position="86"/>
        <end position="90"/>
    </location>
</feature>
<feature type="strand" evidence="8">
    <location>
        <begin position="96"/>
        <end position="102"/>
    </location>
</feature>
<feature type="turn" evidence="8">
    <location>
        <begin position="103"/>
        <end position="105"/>
    </location>
</feature>
<feature type="helix" evidence="8">
    <location>
        <begin position="110"/>
        <end position="112"/>
    </location>
</feature>
<feature type="strand" evidence="7">
    <location>
        <begin position="116"/>
        <end position="118"/>
    </location>
</feature>
<feature type="strand" evidence="8">
    <location>
        <begin position="120"/>
        <end position="129"/>
    </location>
</feature>
<feature type="strand" evidence="8">
    <location>
        <begin position="135"/>
        <end position="144"/>
    </location>
</feature>
<feature type="turn" evidence="8">
    <location>
        <begin position="145"/>
        <end position="147"/>
    </location>
</feature>
<feature type="strand" evidence="8">
    <location>
        <begin position="148"/>
        <end position="151"/>
    </location>
</feature>
<feature type="helix" evidence="8">
    <location>
        <begin position="153"/>
        <end position="155"/>
    </location>
</feature>
<feature type="strand" evidence="8">
    <location>
        <begin position="157"/>
        <end position="160"/>
    </location>
</feature>
<feature type="strand" evidence="8">
    <location>
        <begin position="163"/>
        <end position="169"/>
    </location>
</feature>
<feature type="strand" evidence="8">
    <location>
        <begin position="175"/>
        <end position="180"/>
    </location>
</feature>
<feature type="helix" evidence="8">
    <location>
        <begin position="182"/>
        <end position="191"/>
    </location>
</feature>
<feature type="turn" evidence="7">
    <location>
        <begin position="195"/>
        <end position="197"/>
    </location>
</feature>
<feature type="strand" evidence="8">
    <location>
        <begin position="200"/>
        <end position="204"/>
    </location>
</feature>
<feature type="strand" evidence="8">
    <location>
        <begin position="208"/>
        <end position="213"/>
    </location>
</feature>
<feature type="strand" evidence="8">
    <location>
        <begin position="218"/>
        <end position="225"/>
    </location>
</feature>
<feature type="helix" evidence="5">
    <location>
        <begin position="228"/>
        <end position="233"/>
    </location>
</feature>
<feature type="helix" evidence="5">
    <location>
        <begin position="248"/>
        <end position="251"/>
    </location>
</feature>
<feature type="strand" evidence="8">
    <location>
        <begin position="255"/>
        <end position="259"/>
    </location>
</feature>
<feature type="strand" evidence="8">
    <location>
        <begin position="265"/>
        <end position="269"/>
    </location>
</feature>
<feature type="helix" evidence="8">
    <location>
        <begin position="273"/>
        <end position="280"/>
    </location>
</feature>
<feature type="strand" evidence="8">
    <location>
        <begin position="285"/>
        <end position="291"/>
    </location>
</feature>
<feature type="strand" evidence="8">
    <location>
        <begin position="293"/>
        <end position="296"/>
    </location>
</feature>
<feature type="strand" evidence="8">
    <location>
        <begin position="298"/>
        <end position="303"/>
    </location>
</feature>
<feature type="strand" evidence="6">
    <location>
        <begin position="304"/>
        <end position="306"/>
    </location>
</feature>
<feature type="strand" evidence="8">
    <location>
        <begin position="310"/>
        <end position="314"/>
    </location>
</feature>
<gene>
    <name type="ORF">UL42</name>
</gene>
<proteinExistence type="evidence at protein level"/>
<protein>
    <recommendedName>
        <fullName>DNA polymerase processivity factor</fullName>
    </recommendedName>
    <alternativeName>
        <fullName>DNA-binding protein UL42</fullName>
    </alternativeName>
    <alternativeName>
        <fullName>Polymerase accessory protein</fullName>
        <shortName>PAP</shortName>
    </alternativeName>
</protein>
<name>PAP_HHV11</name>
<sequence length="488" mass="51159">MTDSPGGVAPASPVEDASDASLGQPEEGAPCQVVLQGAELNGILQAFAPLRTSLLDSLLVMGDRGILIHNTIFGEQVFLPLEHSQFSRYRWRGPTAAFLSLVDQKRSLLSVFRANQYPDLRRVELAITGQAPFRTLVQRIWTTTSDGEAVELASETLMKRELTSFVVLVPQGTPDVQLRLTRPQLTKVLNATGADSATPTTFELGVNGKFSVFTTSTCVTFAAREEGVSSSTSTQVQILSNALTKAGQAAANAKTVYGENTHRTFSVVVDDCSMRAVLRRLQVGGGTLKFFLTTPVPSLCVTATGPNAVSAVFLLKPQKICLDWLGHSQGSPSAGSSASRASGSEPTDSQDSASDAVSHGDPEDLDGAARAGEAGALHACPMPSSTTRVTPTTKRGRSGGEDARADTALKKPKTGSPTAPPPADPVPLDTEDDSDAADGTAARPAAPDARSGSRYACYFRDLPTGEASPGAFSAFRGGPQTPYGFGFP</sequence>
<evidence type="ECO:0000256" key="1">
    <source>
        <dbReference type="SAM" id="MobiDB-lite"/>
    </source>
</evidence>
<evidence type="ECO:0000269" key="2">
    <source>
    </source>
</evidence>
<evidence type="ECO:0000269" key="3">
    <source>
    </source>
</evidence>
<evidence type="ECO:0000305" key="4"/>
<evidence type="ECO:0007829" key="5">
    <source>
        <dbReference type="PDB" id="1DML"/>
    </source>
</evidence>
<evidence type="ECO:0007829" key="6">
    <source>
        <dbReference type="PDB" id="8OJ6"/>
    </source>
</evidence>
<evidence type="ECO:0007829" key="7">
    <source>
        <dbReference type="PDB" id="8OJ7"/>
    </source>
</evidence>
<evidence type="ECO:0007829" key="8">
    <source>
        <dbReference type="PDB" id="8OJA"/>
    </source>
</evidence>
<accession>P10226</accession>
<accession>B9VQH0</accession>
<accession>Q09I91</accession>
<reference key="1">
    <citation type="journal article" date="1988" name="J. Gen. Virol.">
        <title>The complete DNA sequence of the long unique region in the genome of herpes simplex virus type 1.</title>
        <authorList>
            <person name="McGeoch D.J."/>
            <person name="Dalrymple M.A."/>
            <person name="Davison A.J."/>
            <person name="Dolan A."/>
            <person name="Frame M.C."/>
            <person name="McNab D."/>
            <person name="Perry L.J."/>
            <person name="Scott J.E."/>
            <person name="Taylor P."/>
        </authorList>
    </citation>
    <scope>NUCLEOTIDE SEQUENCE [LARGE SCALE GENOMIC DNA]</scope>
</reference>
<reference key="2">
    <citation type="journal article" date="1988" name="J. Virol.">
        <title>Structures of herpes simplex virus type 1 genes required for replication of virus DNA.</title>
        <authorList>
            <person name="McGeoch D.J."/>
            <person name="Dalrymple M.A."/>
            <person name="Dolan A."/>
            <person name="McNab D."/>
            <person name="Perry L.J."/>
            <person name="Taylor P."/>
            <person name="Challberg M.D."/>
        </authorList>
    </citation>
    <scope>NUCLEOTIDE SEQUENCE [GENOMIC DNA]</scope>
</reference>
<reference key="3">
    <citation type="journal article" date="2007" name="Microbes Infect.">
        <title>Determination and analysis of the DNA sequence of highly attenuated herpes simplex virus type 1 mutant HF10, a potential oncolytic virus.</title>
        <authorList>
            <person name="Ushijima Y."/>
            <person name="Luo C."/>
            <person name="Goshima F."/>
            <person name="Yamauchi Y."/>
            <person name="Kimura H."/>
            <person name="Nishiyama Y."/>
        </authorList>
    </citation>
    <scope>NUCLEOTIDE SEQUENCE [LARGE SCALE GENOMIC DNA]</scope>
    <source>
        <strain>Nonneuroinvasive mutant HF10</strain>
    </source>
</reference>
<reference key="4">
    <citation type="submission" date="2008-12" db="EMBL/GenBank/DDBJ databases">
        <title>Herpes simplex virus type 1 bacterial artificial chromosome.</title>
        <authorList>
            <person name="Cunningham C."/>
            <person name="Davison A.J."/>
        </authorList>
    </citation>
    <scope>NUCLEOTIDE SEQUENCE [LARGE SCALE GENOMIC DNA]</scope>
    <source>
        <strain>17 syn+</strain>
    </source>
</reference>
<reference key="5">
    <citation type="journal article" date="1990" name="J. Virol.">
        <title>The herpes simplex virus type 1 UL42 gene product: a subunit of DNA polymerase that functions to increase processivity.</title>
        <authorList>
            <person name="Gottlieb J."/>
            <person name="Marcy A.I."/>
            <person name="Coen D.M."/>
            <person name="Challberg M.D."/>
        </authorList>
    </citation>
    <scope>FUNCTION</scope>
    <scope>INTERACTION WITH UL30</scope>
</reference>
<reference key="6">
    <citation type="journal article" date="2005" name="Nucleic Acids Res.">
        <title>The herpes simplex virus type 1 DNA polymerase processivity factor, UL42, does not alter the catalytic activity of the UL9 origin-binding protein but facilitates its loading onto DNA.</title>
        <authorList>
            <person name="Trego K.S."/>
            <person name="Zhu Y."/>
            <person name="Parris D.S."/>
        </authorList>
    </citation>
    <scope>INTERACTION WITH UL9</scope>
</reference>
<reference key="7">
    <citation type="journal article" date="2008" name="Biochemistry">
        <title>Nuclear import of HSV-1 DNA polymerase processivity factor UL42 is mediated by a C-terminally located bipartite nuclear localization signal.</title>
        <authorList>
            <person name="Alvisi G."/>
            <person name="Avanzi S."/>
            <person name="Musiani D."/>
            <person name="Camozzi D."/>
            <person name="Leoni V."/>
            <person name="Ly-Huynh J.D."/>
            <person name="Ripalti A."/>
        </authorList>
    </citation>
    <scope>NUCLEAR LOCALIZATION SIGNAL</scope>
</reference>
<reference key="8">
    <citation type="journal article" date="2004" name="Proteins">
        <title>The extended left-handed helix: a simple nucleic acid-binding motif.</title>
        <authorList>
            <person name="Hicks J.M."/>
            <person name="Hsu V.L."/>
        </authorList>
    </citation>
    <scope>X-RAY CRYSTALLOGRAPHY (2.7 ANGSTROMS) OF 1-319</scope>
</reference>
<dbReference type="EMBL" id="X14112">
    <property type="protein sequence ID" value="CAA32305.1"/>
    <property type="molecule type" value="Genomic_DNA"/>
</dbReference>
<dbReference type="EMBL" id="AH002360">
    <property type="protein sequence ID" value="AAA45824.1"/>
    <property type="molecule type" value="Genomic_DNA"/>
</dbReference>
<dbReference type="EMBL" id="DQ889502">
    <property type="protein sequence ID" value="ABI63504.1"/>
    <property type="molecule type" value="Genomic_DNA"/>
</dbReference>
<dbReference type="EMBL" id="FJ593289">
    <property type="protein sequence ID" value="ACM62265.1"/>
    <property type="molecule type" value="Genomic_DNA"/>
</dbReference>
<dbReference type="PIR" id="D29890">
    <property type="entry name" value="WMBE42"/>
</dbReference>
<dbReference type="RefSeq" id="YP_009137117.1">
    <property type="nucleotide sequence ID" value="NC_001806.2"/>
</dbReference>
<dbReference type="PDB" id="1DML">
    <property type="method" value="X-ray"/>
    <property type="resolution" value="2.70 A"/>
    <property type="chains" value="A/C/E/G=1-319"/>
</dbReference>
<dbReference type="PDB" id="8OJ6">
    <property type="method" value="EM"/>
    <property type="resolution" value="2.41 A"/>
    <property type="chains" value="B=1-488"/>
</dbReference>
<dbReference type="PDB" id="8OJ7">
    <property type="method" value="EM"/>
    <property type="resolution" value="2.46 A"/>
    <property type="chains" value="B=1-488"/>
</dbReference>
<dbReference type="PDB" id="8OJA">
    <property type="method" value="EM"/>
    <property type="resolution" value="1.87 A"/>
    <property type="chains" value="B=1-488"/>
</dbReference>
<dbReference type="PDB" id="9ENP">
    <property type="method" value="EM"/>
    <property type="resolution" value="2.12 A"/>
    <property type="chains" value="B=1-488"/>
</dbReference>
<dbReference type="PDBsum" id="1DML"/>
<dbReference type="PDBsum" id="8OJ6"/>
<dbReference type="PDBsum" id="8OJ7"/>
<dbReference type="PDBsum" id="8OJA"/>
<dbReference type="PDBsum" id="9ENP"/>
<dbReference type="EMDB" id="EMD-16906"/>
<dbReference type="EMDB" id="EMD-16907"/>
<dbReference type="EMDB" id="EMD-16909"/>
<dbReference type="EMDB" id="EMD-19837"/>
<dbReference type="SMR" id="P10226"/>
<dbReference type="BioGRID" id="971437">
    <property type="interactions" value="4"/>
</dbReference>
<dbReference type="IntAct" id="P10226">
    <property type="interactions" value="6"/>
</dbReference>
<dbReference type="MINT" id="P10226"/>
<dbReference type="GeneID" id="24271471"/>
<dbReference type="KEGG" id="vg:24271471"/>
<dbReference type="EvolutionaryTrace" id="P10226"/>
<dbReference type="Proteomes" id="UP000009294">
    <property type="component" value="Segment"/>
</dbReference>
<dbReference type="Proteomes" id="UP000180652">
    <property type="component" value="Segment"/>
</dbReference>
<dbReference type="GO" id="GO:0042575">
    <property type="term" value="C:DNA polymerase complex"/>
    <property type="evidence" value="ECO:0000314"/>
    <property type="project" value="GO_Central"/>
</dbReference>
<dbReference type="GO" id="GO:0042025">
    <property type="term" value="C:host cell nucleus"/>
    <property type="evidence" value="ECO:0000314"/>
    <property type="project" value="UniProtKB"/>
</dbReference>
<dbReference type="GO" id="GO:0003677">
    <property type="term" value="F:DNA binding"/>
    <property type="evidence" value="ECO:0000314"/>
    <property type="project" value="UniProtKB"/>
</dbReference>
<dbReference type="GO" id="GO:0030337">
    <property type="term" value="F:DNA polymerase processivity factor activity"/>
    <property type="evidence" value="ECO:0000314"/>
    <property type="project" value="GO_Central"/>
</dbReference>
<dbReference type="GO" id="GO:0039686">
    <property type="term" value="P:bidirectional double-stranded viral DNA replication"/>
    <property type="evidence" value="ECO:0000314"/>
    <property type="project" value="UniProtKB"/>
</dbReference>
<dbReference type="GO" id="GO:0006260">
    <property type="term" value="P:DNA replication"/>
    <property type="evidence" value="ECO:0007669"/>
    <property type="project" value="UniProtKB-KW"/>
</dbReference>
<dbReference type="Gene3D" id="3.70.10.10">
    <property type="match status" value="1"/>
</dbReference>
<dbReference type="InterPro" id="IPR046938">
    <property type="entry name" value="DNA_clamp_sf"/>
</dbReference>
<dbReference type="InterPro" id="IPR003202">
    <property type="entry name" value="Herpes_UL42"/>
</dbReference>
<dbReference type="Pfam" id="PF02282">
    <property type="entry name" value="Herpes_UL42"/>
    <property type="match status" value="2"/>
</dbReference>
<dbReference type="SUPFAM" id="SSF55979">
    <property type="entry name" value="DNA clamp"/>
    <property type="match status" value="2"/>
</dbReference>
<comment type="function">
    <text evidence="3">Plays an essential role in viral DNA replication by acting as the polymerase accessory subunit. Associates with the viral polymerase to increase its processivity and forms high-affinity direct interactions with DNA. Facilitates the origin-binding protein UL9 loading onto DNA thus increasing its ability to assemble into a functional complex capable of unwinding duplex DNA.</text>
</comment>
<comment type="subunit">
    <text evidence="2 3">Interacts with the DNA polymerase catalytic subunit UL30. Interacts with the origin-binding protein.</text>
</comment>
<comment type="interaction">
    <interactant intactId="EBI-1029310">
        <id>P10226</id>
    </interactant>
    <interactant intactId="EBI-8615017">
        <id>P04293</id>
        <label>UL30</label>
    </interactant>
    <organismsDiffer>false</organismsDiffer>
    <experiments>3</experiments>
</comment>
<comment type="interaction">
    <interactant intactId="EBI-1029310">
        <id>P10226</id>
    </interactant>
    <interactant intactId="EBI-8596799">
        <id>P10193</id>
        <label>UL9</label>
    </interactant>
    <organismsDiffer>false</organismsDiffer>
    <experiments>3</experiments>
</comment>
<comment type="interaction">
    <interactant intactId="EBI-1029310">
        <id>P10226</id>
    </interactant>
    <interactant intactId="EBI-300010">
        <id>P19838</id>
        <label>NFKB1</label>
    </interactant>
    <organismsDiffer>true</organismsDiffer>
    <experiments>4</experiments>
</comment>
<comment type="interaction">
    <interactant intactId="EBI-1029310">
        <id>P10226</id>
    </interactant>
    <interactant intactId="EBI-697771">
        <id>PRO_0000030311</id>
        <label>NFKB1</label>
        <dbReference type="UniProtKB" id="P19838"/>
    </interactant>
    <organismsDiffer>true</organismsDiffer>
    <experiments>2</experiments>
</comment>
<comment type="interaction">
    <interactant intactId="EBI-1029310">
        <id>P10226</id>
    </interactant>
    <interactant intactId="EBI-73886">
        <id>Q04206</id>
        <label>RELA</label>
    </interactant>
    <organismsDiffer>true</organismsDiffer>
    <experiments>6</experiments>
</comment>
<comment type="subcellular location">
    <subcellularLocation>
        <location>Host nucleus</location>
    </subcellularLocation>
</comment>
<comment type="similarity">
    <text evidence="4">Belongs to the herpesviridae DNA polymerase processivity factor family.</text>
</comment>
<organismHost>
    <name type="scientific">Homo sapiens</name>
    <name type="common">Human</name>
    <dbReference type="NCBI Taxonomy" id="9606"/>
</organismHost>
<organism>
    <name type="scientific">Human herpesvirus 1 (strain 17)</name>
    <name type="common">HHV-1</name>
    <name type="synonym">Human herpes simplex virus 1</name>
    <dbReference type="NCBI Taxonomy" id="10299"/>
    <lineage>
        <taxon>Viruses</taxon>
        <taxon>Duplodnaviria</taxon>
        <taxon>Heunggongvirae</taxon>
        <taxon>Peploviricota</taxon>
        <taxon>Herviviricetes</taxon>
        <taxon>Herpesvirales</taxon>
        <taxon>Orthoherpesviridae</taxon>
        <taxon>Alphaherpesvirinae</taxon>
        <taxon>Simplexvirus</taxon>
        <taxon>Simplexvirus humanalpha1</taxon>
        <taxon>Human herpesvirus 1</taxon>
    </lineage>
</organism>
<keyword id="KW-0002">3D-structure</keyword>
<keyword id="KW-0235">DNA replication</keyword>
<keyword id="KW-0238">DNA-binding</keyword>
<keyword id="KW-1048">Host nucleus</keyword>
<keyword id="KW-1185">Reference proteome</keyword>